<proteinExistence type="inferred from homology"/>
<sequence length="106" mass="12336">MAVKIRLARFGAKKRPFYRIVVADSRAPRDGRFIERIGQYDPMLSKDNKNCVVVKADRLKYWLNVGAQASERVLWFIKKGIITLEAEKKKVETKKAEIKKVKEQEV</sequence>
<organism>
    <name type="scientific">Wolbachia sp. subsp. Brugia malayi (strain TRS)</name>
    <dbReference type="NCBI Taxonomy" id="292805"/>
    <lineage>
        <taxon>Bacteria</taxon>
        <taxon>Pseudomonadati</taxon>
        <taxon>Pseudomonadota</taxon>
        <taxon>Alphaproteobacteria</taxon>
        <taxon>Rickettsiales</taxon>
        <taxon>Anaplasmataceae</taxon>
        <taxon>Wolbachieae</taxon>
        <taxon>Wolbachia</taxon>
    </lineage>
</organism>
<keyword id="KW-1185">Reference proteome</keyword>
<keyword id="KW-0687">Ribonucleoprotein</keyword>
<keyword id="KW-0689">Ribosomal protein</keyword>
<accession>Q5GSA5</accession>
<name>RS16_WOLTR</name>
<feature type="chain" id="PRO_0000243892" description="Small ribosomal subunit protein bS16">
    <location>
        <begin position="1"/>
        <end position="106"/>
    </location>
</feature>
<dbReference type="EMBL" id="AE017321">
    <property type="protein sequence ID" value="AAW71119.1"/>
    <property type="molecule type" value="Genomic_DNA"/>
</dbReference>
<dbReference type="RefSeq" id="WP_011256729.1">
    <property type="nucleotide sequence ID" value="NC_006833.1"/>
</dbReference>
<dbReference type="SMR" id="Q5GSA5"/>
<dbReference type="STRING" id="292805.Wbm0531"/>
<dbReference type="KEGG" id="wbm:Wbm0531"/>
<dbReference type="eggNOG" id="COG0228">
    <property type="taxonomic scope" value="Bacteria"/>
</dbReference>
<dbReference type="HOGENOM" id="CLU_100590_5_2_5"/>
<dbReference type="Proteomes" id="UP000000534">
    <property type="component" value="Chromosome"/>
</dbReference>
<dbReference type="GO" id="GO:0005737">
    <property type="term" value="C:cytoplasm"/>
    <property type="evidence" value="ECO:0007669"/>
    <property type="project" value="UniProtKB-ARBA"/>
</dbReference>
<dbReference type="GO" id="GO:0015935">
    <property type="term" value="C:small ribosomal subunit"/>
    <property type="evidence" value="ECO:0007669"/>
    <property type="project" value="TreeGrafter"/>
</dbReference>
<dbReference type="GO" id="GO:0003735">
    <property type="term" value="F:structural constituent of ribosome"/>
    <property type="evidence" value="ECO:0007669"/>
    <property type="project" value="InterPro"/>
</dbReference>
<dbReference type="GO" id="GO:0006412">
    <property type="term" value="P:translation"/>
    <property type="evidence" value="ECO:0007669"/>
    <property type="project" value="UniProtKB-UniRule"/>
</dbReference>
<dbReference type="Gene3D" id="3.30.1320.10">
    <property type="match status" value="1"/>
</dbReference>
<dbReference type="HAMAP" id="MF_00385">
    <property type="entry name" value="Ribosomal_bS16"/>
    <property type="match status" value="1"/>
</dbReference>
<dbReference type="InterPro" id="IPR000307">
    <property type="entry name" value="Ribosomal_bS16"/>
</dbReference>
<dbReference type="InterPro" id="IPR020592">
    <property type="entry name" value="Ribosomal_bS16_CS"/>
</dbReference>
<dbReference type="InterPro" id="IPR023803">
    <property type="entry name" value="Ribosomal_bS16_dom_sf"/>
</dbReference>
<dbReference type="NCBIfam" id="TIGR00002">
    <property type="entry name" value="S16"/>
    <property type="match status" value="1"/>
</dbReference>
<dbReference type="PANTHER" id="PTHR12919">
    <property type="entry name" value="30S RIBOSOMAL PROTEIN S16"/>
    <property type="match status" value="1"/>
</dbReference>
<dbReference type="PANTHER" id="PTHR12919:SF20">
    <property type="entry name" value="SMALL RIBOSOMAL SUBUNIT PROTEIN BS16M"/>
    <property type="match status" value="1"/>
</dbReference>
<dbReference type="Pfam" id="PF00886">
    <property type="entry name" value="Ribosomal_S16"/>
    <property type="match status" value="1"/>
</dbReference>
<dbReference type="SUPFAM" id="SSF54565">
    <property type="entry name" value="Ribosomal protein S16"/>
    <property type="match status" value="1"/>
</dbReference>
<dbReference type="PROSITE" id="PS00732">
    <property type="entry name" value="RIBOSOMAL_S16"/>
    <property type="match status" value="1"/>
</dbReference>
<gene>
    <name evidence="1" type="primary">rpsP</name>
    <name type="ordered locus">Wbm0531</name>
</gene>
<comment type="similarity">
    <text evidence="1">Belongs to the bacterial ribosomal protein bS16 family.</text>
</comment>
<reference key="1">
    <citation type="journal article" date="2005" name="PLoS Biol.">
        <title>The Wolbachia genome of Brugia malayi: endosymbiont evolution within a human pathogenic nematode.</title>
        <authorList>
            <person name="Foster J."/>
            <person name="Ganatra M."/>
            <person name="Kamal I."/>
            <person name="Ware J."/>
            <person name="Makarova K."/>
            <person name="Ivanova N."/>
            <person name="Bhattacharyya A."/>
            <person name="Kapatral V."/>
            <person name="Kumar S."/>
            <person name="Posfai J."/>
            <person name="Vincze T."/>
            <person name="Ingram J."/>
            <person name="Moran L."/>
            <person name="Lapidus A."/>
            <person name="Omelchenko M."/>
            <person name="Kyrpides N."/>
            <person name="Ghedin E."/>
            <person name="Wang S."/>
            <person name="Goltsman E."/>
            <person name="Joukov V."/>
            <person name="Ostrovskaya O."/>
            <person name="Tsukerman K."/>
            <person name="Mazur M."/>
            <person name="Comb D."/>
            <person name="Koonin E."/>
            <person name="Slatko B."/>
        </authorList>
    </citation>
    <scope>NUCLEOTIDE SEQUENCE [LARGE SCALE GENOMIC DNA]</scope>
    <source>
        <strain>TRS</strain>
    </source>
</reference>
<evidence type="ECO:0000255" key="1">
    <source>
        <dbReference type="HAMAP-Rule" id="MF_00385"/>
    </source>
</evidence>
<evidence type="ECO:0000305" key="2"/>
<protein>
    <recommendedName>
        <fullName evidence="1">Small ribosomal subunit protein bS16</fullName>
    </recommendedName>
    <alternativeName>
        <fullName evidence="2">30S ribosomal protein S16</fullName>
    </alternativeName>
</protein>